<comment type="function">
    <text evidence="1">Required for the formation of a threonylcarbamoyl group on adenosine at position 37 (t(6)A37) in tRNAs that read codons beginning with adenine. Is involved in the transfer of the threonylcarbamoyl moiety of threonylcarbamoyl-AMP (TC-AMP) to the N6 group of A37, together with TsaE and TsaB. TsaD likely plays a direct catalytic role in this reaction.</text>
</comment>
<comment type="catalytic activity">
    <reaction evidence="1">
        <text>L-threonylcarbamoyladenylate + adenosine(37) in tRNA = N(6)-L-threonylcarbamoyladenosine(37) in tRNA + AMP + H(+)</text>
        <dbReference type="Rhea" id="RHEA:37059"/>
        <dbReference type="Rhea" id="RHEA-COMP:10162"/>
        <dbReference type="Rhea" id="RHEA-COMP:10163"/>
        <dbReference type="ChEBI" id="CHEBI:15378"/>
        <dbReference type="ChEBI" id="CHEBI:73682"/>
        <dbReference type="ChEBI" id="CHEBI:74411"/>
        <dbReference type="ChEBI" id="CHEBI:74418"/>
        <dbReference type="ChEBI" id="CHEBI:456215"/>
        <dbReference type="EC" id="2.3.1.234"/>
    </reaction>
</comment>
<comment type="cofactor">
    <cofactor evidence="1">
        <name>Fe(2+)</name>
        <dbReference type="ChEBI" id="CHEBI:29033"/>
    </cofactor>
    <text evidence="1">Binds 1 Fe(2+) ion per subunit.</text>
</comment>
<comment type="subcellular location">
    <subcellularLocation>
        <location evidence="1">Cytoplasm</location>
    </subcellularLocation>
</comment>
<comment type="similarity">
    <text evidence="1">Belongs to the KAE1 / TsaD family.</text>
</comment>
<name>TSAD_STAAT</name>
<evidence type="ECO:0000255" key="1">
    <source>
        <dbReference type="HAMAP-Rule" id="MF_01445"/>
    </source>
</evidence>
<gene>
    <name evidence="1" type="primary">tsaD</name>
    <name type="synonym">gcp</name>
    <name type="ordered locus">USA300HOU_2044</name>
</gene>
<keyword id="KW-0012">Acyltransferase</keyword>
<keyword id="KW-0963">Cytoplasm</keyword>
<keyword id="KW-0408">Iron</keyword>
<keyword id="KW-0479">Metal-binding</keyword>
<keyword id="KW-0808">Transferase</keyword>
<keyword id="KW-0819">tRNA processing</keyword>
<protein>
    <recommendedName>
        <fullName evidence="1">tRNA N6-adenosine threonylcarbamoyltransferase</fullName>
        <ecNumber evidence="1">2.3.1.234</ecNumber>
    </recommendedName>
    <alternativeName>
        <fullName evidence="1">N6-L-threonylcarbamoyladenine synthase</fullName>
        <shortName evidence="1">t(6)A synthase</shortName>
    </alternativeName>
    <alternativeName>
        <fullName evidence="1">t(6)A37 threonylcarbamoyladenosine biosynthesis protein TsaD</fullName>
    </alternativeName>
    <alternativeName>
        <fullName evidence="1">tRNA threonylcarbamoyladenosine biosynthesis protein TsaD</fullName>
    </alternativeName>
</protein>
<feature type="chain" id="PRO_1000087495" description="tRNA N6-adenosine threonylcarbamoyltransferase">
    <location>
        <begin position="1"/>
        <end position="341"/>
    </location>
</feature>
<feature type="binding site" evidence="1">
    <location>
        <position position="115"/>
    </location>
    <ligand>
        <name>Fe cation</name>
        <dbReference type="ChEBI" id="CHEBI:24875"/>
    </ligand>
</feature>
<feature type="binding site" evidence="1">
    <location>
        <position position="119"/>
    </location>
    <ligand>
        <name>Fe cation</name>
        <dbReference type="ChEBI" id="CHEBI:24875"/>
    </ligand>
</feature>
<feature type="binding site" evidence="1">
    <location>
        <begin position="137"/>
        <end position="141"/>
    </location>
    <ligand>
        <name>substrate</name>
    </ligand>
</feature>
<feature type="binding site" evidence="1">
    <location>
        <position position="170"/>
    </location>
    <ligand>
        <name>substrate</name>
    </ligand>
</feature>
<feature type="binding site" evidence="1">
    <location>
        <position position="183"/>
    </location>
    <ligand>
        <name>substrate</name>
    </ligand>
</feature>
<feature type="binding site" evidence="1">
    <location>
        <position position="187"/>
    </location>
    <ligand>
        <name>substrate</name>
    </ligand>
</feature>
<feature type="binding site" evidence="1">
    <location>
        <position position="276"/>
    </location>
    <ligand>
        <name>substrate</name>
    </ligand>
</feature>
<feature type="binding site" evidence="1">
    <location>
        <position position="304"/>
    </location>
    <ligand>
        <name>Fe cation</name>
        <dbReference type="ChEBI" id="CHEBI:24875"/>
    </ligand>
</feature>
<dbReference type="EC" id="2.3.1.234" evidence="1"/>
<dbReference type="EMBL" id="CP000730">
    <property type="protein sequence ID" value="ABX30041.1"/>
    <property type="molecule type" value="Genomic_DNA"/>
</dbReference>
<dbReference type="RefSeq" id="WP_000159034.1">
    <property type="nucleotide sequence ID" value="NC_010079.1"/>
</dbReference>
<dbReference type="SMR" id="A8Z4V2"/>
<dbReference type="KEGG" id="sax:USA300HOU_2044"/>
<dbReference type="HOGENOM" id="CLU_023208_0_2_9"/>
<dbReference type="GO" id="GO:0005737">
    <property type="term" value="C:cytoplasm"/>
    <property type="evidence" value="ECO:0007669"/>
    <property type="project" value="UniProtKB-SubCell"/>
</dbReference>
<dbReference type="GO" id="GO:0005506">
    <property type="term" value="F:iron ion binding"/>
    <property type="evidence" value="ECO:0007669"/>
    <property type="project" value="UniProtKB-UniRule"/>
</dbReference>
<dbReference type="GO" id="GO:0061711">
    <property type="term" value="F:N(6)-L-threonylcarbamoyladenine synthase activity"/>
    <property type="evidence" value="ECO:0007669"/>
    <property type="project" value="UniProtKB-EC"/>
</dbReference>
<dbReference type="GO" id="GO:0002949">
    <property type="term" value="P:tRNA threonylcarbamoyladenosine modification"/>
    <property type="evidence" value="ECO:0007669"/>
    <property type="project" value="UniProtKB-UniRule"/>
</dbReference>
<dbReference type="CDD" id="cd24133">
    <property type="entry name" value="ASKHA_NBD_TsaD_bac"/>
    <property type="match status" value="1"/>
</dbReference>
<dbReference type="FunFam" id="3.30.420.40:FF:000012">
    <property type="entry name" value="tRNA N6-adenosine threonylcarbamoyltransferase"/>
    <property type="match status" value="1"/>
</dbReference>
<dbReference type="FunFam" id="3.30.420.40:FF:000040">
    <property type="entry name" value="tRNA N6-adenosine threonylcarbamoyltransferase"/>
    <property type="match status" value="1"/>
</dbReference>
<dbReference type="Gene3D" id="3.30.420.40">
    <property type="match status" value="2"/>
</dbReference>
<dbReference type="HAMAP" id="MF_01445">
    <property type="entry name" value="TsaD"/>
    <property type="match status" value="1"/>
</dbReference>
<dbReference type="InterPro" id="IPR043129">
    <property type="entry name" value="ATPase_NBD"/>
</dbReference>
<dbReference type="InterPro" id="IPR000905">
    <property type="entry name" value="Gcp-like_dom"/>
</dbReference>
<dbReference type="InterPro" id="IPR017861">
    <property type="entry name" value="KAE1/TsaD"/>
</dbReference>
<dbReference type="InterPro" id="IPR017860">
    <property type="entry name" value="Peptidase_M22_CS"/>
</dbReference>
<dbReference type="InterPro" id="IPR022450">
    <property type="entry name" value="TsaD"/>
</dbReference>
<dbReference type="NCBIfam" id="TIGR00329">
    <property type="entry name" value="gcp_kae1"/>
    <property type="match status" value="1"/>
</dbReference>
<dbReference type="NCBIfam" id="TIGR03723">
    <property type="entry name" value="T6A_TsaD_YgjD"/>
    <property type="match status" value="1"/>
</dbReference>
<dbReference type="PANTHER" id="PTHR11735">
    <property type="entry name" value="TRNA N6-ADENOSINE THREONYLCARBAMOYLTRANSFERASE"/>
    <property type="match status" value="1"/>
</dbReference>
<dbReference type="PANTHER" id="PTHR11735:SF6">
    <property type="entry name" value="TRNA N6-ADENOSINE THREONYLCARBAMOYLTRANSFERASE, MITOCHONDRIAL"/>
    <property type="match status" value="1"/>
</dbReference>
<dbReference type="Pfam" id="PF00814">
    <property type="entry name" value="TsaD"/>
    <property type="match status" value="1"/>
</dbReference>
<dbReference type="PRINTS" id="PR00789">
    <property type="entry name" value="OSIALOPTASE"/>
</dbReference>
<dbReference type="SUPFAM" id="SSF53067">
    <property type="entry name" value="Actin-like ATPase domain"/>
    <property type="match status" value="2"/>
</dbReference>
<dbReference type="PROSITE" id="PS01016">
    <property type="entry name" value="GLYCOPROTEASE"/>
    <property type="match status" value="1"/>
</dbReference>
<proteinExistence type="inferred from homology"/>
<accession>A8Z4V2</accession>
<reference key="1">
    <citation type="journal article" date="2007" name="BMC Microbiol.">
        <title>Subtle genetic changes enhance virulence of methicillin resistant and sensitive Staphylococcus aureus.</title>
        <authorList>
            <person name="Highlander S.K."/>
            <person name="Hulten K.G."/>
            <person name="Qin X."/>
            <person name="Jiang H."/>
            <person name="Yerrapragada S."/>
            <person name="Mason E.O. Jr."/>
            <person name="Shang Y."/>
            <person name="Williams T.M."/>
            <person name="Fortunov R.M."/>
            <person name="Liu Y."/>
            <person name="Igboeli O."/>
            <person name="Petrosino J."/>
            <person name="Tirumalai M."/>
            <person name="Uzman A."/>
            <person name="Fox G.E."/>
            <person name="Cardenas A.M."/>
            <person name="Muzny D.M."/>
            <person name="Hemphill L."/>
            <person name="Ding Y."/>
            <person name="Dugan S."/>
            <person name="Blyth P.R."/>
            <person name="Buhay C.J."/>
            <person name="Dinh H.H."/>
            <person name="Hawes A.C."/>
            <person name="Holder M."/>
            <person name="Kovar C.L."/>
            <person name="Lee S.L."/>
            <person name="Liu W."/>
            <person name="Nazareth L.V."/>
            <person name="Wang Q."/>
            <person name="Zhou J."/>
            <person name="Kaplan S.L."/>
            <person name="Weinstock G.M."/>
        </authorList>
    </citation>
    <scope>NUCLEOTIDE SEQUENCE [LARGE SCALE GENOMIC DNA]</scope>
    <source>
        <strain>USA300 / TCH1516</strain>
    </source>
</reference>
<organism>
    <name type="scientific">Staphylococcus aureus (strain USA300 / TCH1516)</name>
    <dbReference type="NCBI Taxonomy" id="451516"/>
    <lineage>
        <taxon>Bacteria</taxon>
        <taxon>Bacillati</taxon>
        <taxon>Bacillota</taxon>
        <taxon>Bacilli</taxon>
        <taxon>Bacillales</taxon>
        <taxon>Staphylococcaceae</taxon>
        <taxon>Staphylococcus</taxon>
    </lineage>
</organism>
<sequence length="341" mass="36819">MTKDILILAVETSCDETSVSVIKNGRDILSNTVLSQIESHKRFGGVVPEVASRHHVEGITATINEALGDADVSIEDIDAIAVTEGPGLIGALLIGVNAAKALAFAYDKPLIPVHHIAGHIYANHIEEPLTFPLIALIVSGGHTELVYMKDHLSFEVIGETRDDAVGEAYDKVARTIGLNYPGGPQVDRLAAEGEDTYSFPRVWLDKDSYDFSFSGLKSAVINQLHNQRQKNIPIIEANVATSFQNSVVEVLTFKAIQACKEYGVQRLIVAGGVASNKGLRQSLADQCKVNDIQLTIPSPKLCTDNAAMIGVAGHYLYQQGRFADLALNGHSNIDLEEYSAE</sequence>